<reference key="1">
    <citation type="journal article" date="1997" name="J. Bacteriol.">
        <title>Quorum sensing in Aeromonas hydrophila and Aeromonas salmonicida: identification of the LuxRI homologs AhyRI and AsaRI and their cognate N-acylhomoserine lactone signal molecules.</title>
        <authorList>
            <person name="Swift S."/>
            <person name="Karlyshev A.V."/>
            <person name="Fish L."/>
            <person name="Durant E.L."/>
            <person name="Winson M.K."/>
            <person name="Chhabra S.R."/>
            <person name="Williams P."/>
            <person name="Macintyre S."/>
            <person name="Stewart G.S.A.B."/>
        </authorList>
    </citation>
    <scope>NUCLEOTIDE SEQUENCE [GENOMIC DNA]</scope>
    <source>
        <strain>A1</strain>
    </source>
</reference>
<sequence length="225" mass="24482">MFATTLQGFTLGLAMIIPIGAQNAFVLSRGIHRNHHLLTATLCCLCDLVLIGIGVFGGANLLAASPIGLALLTWGGVLFLGWFGIRSLRSAWRGQGAKLADSPQLMGVKSVLAMTLGVTLLNPHVYLDTLMLLGSFGSQFAEELRSAFAAVAMLASLVWFYSLAFGAVVLSPWLARSRQGYSKLLILLLVSPCWGWRCNWRAGLCWRHKAIFVPHLIKINPGFMR</sequence>
<proteinExistence type="inferred from homology"/>
<keyword id="KW-0029">Amino-acid transport</keyword>
<keyword id="KW-1003">Cell membrane</keyword>
<keyword id="KW-0472">Membrane</keyword>
<keyword id="KW-0812">Transmembrane</keyword>
<keyword id="KW-1133">Transmembrane helix</keyword>
<keyword id="KW-0813">Transport</keyword>
<accession>P52047</accession>
<comment type="subcellular location">
    <subcellularLocation>
        <location evidence="2">Cell membrane</location>
        <topology evidence="2">Multi-pass membrane protein</topology>
    </subcellularLocation>
</comment>
<comment type="similarity">
    <text evidence="2">Belongs to the LysE/ArgO transporter (TC 2.A.75) family.</text>
</comment>
<comment type="sequence caution" evidence="2">
    <conflict type="erroneous initiation">
        <sequence resource="EMBL-CDS" id="CAA61655"/>
    </conflict>
</comment>
<organism>
    <name type="scientific">Aeromonas hydrophila</name>
    <dbReference type="NCBI Taxonomy" id="644"/>
    <lineage>
        <taxon>Bacteria</taxon>
        <taxon>Pseudomonadati</taxon>
        <taxon>Pseudomonadota</taxon>
        <taxon>Gammaproteobacteria</taxon>
        <taxon>Aeromonadales</taxon>
        <taxon>Aeromonadaceae</taxon>
        <taxon>Aeromonas</taxon>
    </lineage>
</organism>
<dbReference type="EMBL" id="X89469">
    <property type="protein sequence ID" value="CAA61655.1"/>
    <property type="status" value="ALT_INIT"/>
    <property type="molecule type" value="Genomic_DNA"/>
</dbReference>
<dbReference type="PIR" id="S57940">
    <property type="entry name" value="S57940"/>
</dbReference>
<dbReference type="eggNOG" id="COG1279">
    <property type="taxonomic scope" value="Bacteria"/>
</dbReference>
<dbReference type="GO" id="GO:0005886">
    <property type="term" value="C:plasma membrane"/>
    <property type="evidence" value="ECO:0007669"/>
    <property type="project" value="UniProtKB-SubCell"/>
</dbReference>
<dbReference type="GO" id="GO:0015171">
    <property type="term" value="F:amino acid transmembrane transporter activity"/>
    <property type="evidence" value="ECO:0007669"/>
    <property type="project" value="TreeGrafter"/>
</dbReference>
<dbReference type="InterPro" id="IPR001123">
    <property type="entry name" value="LeuE-type"/>
</dbReference>
<dbReference type="InterPro" id="IPR004777">
    <property type="entry name" value="Lys/arg_exporter"/>
</dbReference>
<dbReference type="NCBIfam" id="TIGR00948">
    <property type="entry name" value="2a75"/>
    <property type="match status" value="1"/>
</dbReference>
<dbReference type="PANTHER" id="PTHR30086">
    <property type="entry name" value="ARGININE EXPORTER PROTEIN ARGO"/>
    <property type="match status" value="1"/>
</dbReference>
<dbReference type="PANTHER" id="PTHR30086:SF20">
    <property type="entry name" value="ARGININE EXPORTER PROTEIN ARGO-RELATED"/>
    <property type="match status" value="1"/>
</dbReference>
<dbReference type="Pfam" id="PF01810">
    <property type="entry name" value="LysE"/>
    <property type="match status" value="1"/>
</dbReference>
<protein>
    <recommendedName>
        <fullName>Putative amino-acid transporter YggA</fullName>
    </recommendedName>
</protein>
<evidence type="ECO:0000255" key="1"/>
<evidence type="ECO:0000305" key="2"/>
<feature type="chain" id="PRO_0000204170" description="Putative amino-acid transporter YggA">
    <location>
        <begin position="1"/>
        <end position="225"/>
    </location>
</feature>
<feature type="transmembrane region" description="Helical" evidence="1">
    <location>
        <begin position="1"/>
        <end position="21"/>
    </location>
</feature>
<feature type="transmembrane region" description="Helical" evidence="1">
    <location>
        <begin position="37"/>
        <end position="57"/>
    </location>
</feature>
<feature type="transmembrane region" description="Helical" evidence="1">
    <location>
        <begin position="65"/>
        <end position="85"/>
    </location>
</feature>
<feature type="transmembrane region" description="Helical" evidence="1">
    <location>
        <begin position="116"/>
        <end position="136"/>
    </location>
</feature>
<feature type="transmembrane region" description="Helical" evidence="1">
    <location>
        <begin position="150"/>
        <end position="170"/>
    </location>
</feature>
<name>YGGA_AERHY</name>